<gene>
    <name type="primary">atf1</name>
    <name type="synonym">gad7</name>
    <name type="synonym">mts1</name>
    <name type="synonym">sss1</name>
    <name type="ORF">SPBC29B5.01</name>
</gene>
<organism>
    <name type="scientific">Schizosaccharomyces pombe (strain 972 / ATCC 24843)</name>
    <name type="common">Fission yeast</name>
    <dbReference type="NCBI Taxonomy" id="284812"/>
    <lineage>
        <taxon>Eukaryota</taxon>
        <taxon>Fungi</taxon>
        <taxon>Dikarya</taxon>
        <taxon>Ascomycota</taxon>
        <taxon>Taphrinomycotina</taxon>
        <taxon>Schizosaccharomycetes</taxon>
        <taxon>Schizosaccharomycetales</taxon>
        <taxon>Schizosaccharomycetaceae</taxon>
        <taxon>Schizosaccharomyces</taxon>
    </lineage>
</organism>
<dbReference type="EMBL" id="D63762">
    <property type="protein sequence ID" value="BAA09841.1"/>
    <property type="molecule type" value="Genomic_DNA"/>
</dbReference>
<dbReference type="EMBL" id="U38237">
    <property type="protein sequence ID" value="AAA93260.1"/>
    <property type="molecule type" value="Genomic_DNA"/>
</dbReference>
<dbReference type="EMBL" id="U87869">
    <property type="protein sequence ID" value="AAB46990.1"/>
    <property type="molecule type" value="Genomic_DNA"/>
</dbReference>
<dbReference type="EMBL" id="D63666">
    <property type="protein sequence ID" value="BAA09817.1"/>
    <property type="molecule type" value="Genomic_DNA"/>
</dbReference>
<dbReference type="EMBL" id="D83992">
    <property type="protein sequence ID" value="BAA12194.1"/>
    <property type="molecule type" value="Genomic_DNA"/>
</dbReference>
<dbReference type="EMBL" id="CU329671">
    <property type="protein sequence ID" value="CAC05510.1"/>
    <property type="molecule type" value="Genomic_DNA"/>
</dbReference>
<dbReference type="PIR" id="S66147">
    <property type="entry name" value="S66147"/>
</dbReference>
<dbReference type="RefSeq" id="NP_595652.1">
    <property type="nucleotide sequence ID" value="NM_001021546.2"/>
</dbReference>
<dbReference type="SMR" id="P52890"/>
<dbReference type="BioGRID" id="276859">
    <property type="interactions" value="50"/>
</dbReference>
<dbReference type="FunCoup" id="P52890">
    <property type="interactions" value="89"/>
</dbReference>
<dbReference type="IntAct" id="P52890">
    <property type="interactions" value="1"/>
</dbReference>
<dbReference type="STRING" id="284812.P52890"/>
<dbReference type="iPTMnet" id="P52890"/>
<dbReference type="PaxDb" id="4896-SPBC29B5.01.1"/>
<dbReference type="EnsemblFungi" id="SPBC29B5.01.1">
    <property type="protein sequence ID" value="SPBC29B5.01.1:pep"/>
    <property type="gene ID" value="SPBC29B5.01"/>
</dbReference>
<dbReference type="PomBase" id="SPBC29B5.01">
    <property type="gene designation" value="atf1"/>
</dbReference>
<dbReference type="VEuPathDB" id="FungiDB:SPBC29B5.01"/>
<dbReference type="eggNOG" id="KOG1414">
    <property type="taxonomic scope" value="Eukaryota"/>
</dbReference>
<dbReference type="HOGENOM" id="CLU_435572_0_0_1"/>
<dbReference type="InParanoid" id="P52890"/>
<dbReference type="OMA" id="HGAFMSQ"/>
<dbReference type="PhylomeDB" id="P52890"/>
<dbReference type="Reactome" id="R-SPO-3214847">
    <property type="pathway name" value="HATs acetylate histones"/>
</dbReference>
<dbReference type="Reactome" id="R-SPO-450341">
    <property type="pathway name" value="Activation of the AP-1 family of transcription factors"/>
</dbReference>
<dbReference type="PRO" id="PR:P52890"/>
<dbReference type="Proteomes" id="UP000002485">
    <property type="component" value="Chromosome II"/>
</dbReference>
<dbReference type="GO" id="GO:1990243">
    <property type="term" value="C:atf1-pcr1 complex"/>
    <property type="evidence" value="ECO:0000314"/>
    <property type="project" value="PomBase"/>
</dbReference>
<dbReference type="GO" id="GO:0000785">
    <property type="term" value="C:chromatin"/>
    <property type="evidence" value="ECO:0000314"/>
    <property type="project" value="PomBase"/>
</dbReference>
<dbReference type="GO" id="GO:0000792">
    <property type="term" value="C:heterochromatin"/>
    <property type="evidence" value="ECO:0000314"/>
    <property type="project" value="PomBase"/>
</dbReference>
<dbReference type="GO" id="GO:0005634">
    <property type="term" value="C:nucleus"/>
    <property type="evidence" value="ECO:0000314"/>
    <property type="project" value="PomBase"/>
</dbReference>
<dbReference type="GO" id="GO:0140463">
    <property type="term" value="F:chromatin-protein adaptor activity"/>
    <property type="evidence" value="ECO:0000315"/>
    <property type="project" value="PomBase"/>
</dbReference>
<dbReference type="GO" id="GO:0001228">
    <property type="term" value="F:DNA-binding transcription activator activity, RNA polymerase II-specific"/>
    <property type="evidence" value="ECO:0000314"/>
    <property type="project" value="PomBase"/>
</dbReference>
<dbReference type="GO" id="GO:0000981">
    <property type="term" value="F:DNA-binding transcription factor activity, RNA polymerase II-specific"/>
    <property type="evidence" value="ECO:0000318"/>
    <property type="project" value="GO_Central"/>
</dbReference>
<dbReference type="GO" id="GO:0003690">
    <property type="term" value="F:double-stranded DNA binding"/>
    <property type="evidence" value="ECO:0000314"/>
    <property type="project" value="PomBase"/>
</dbReference>
<dbReference type="GO" id="GO:0010844">
    <property type="term" value="F:recombination hotspot binding"/>
    <property type="evidence" value="ECO:0000314"/>
    <property type="project" value="PomBase"/>
</dbReference>
<dbReference type="GO" id="GO:0003723">
    <property type="term" value="F:RNA binding"/>
    <property type="evidence" value="ECO:0000314"/>
    <property type="project" value="PomBase"/>
</dbReference>
<dbReference type="GO" id="GO:0000978">
    <property type="term" value="F:RNA polymerase II cis-regulatory region sequence-specific DNA binding"/>
    <property type="evidence" value="ECO:0000314"/>
    <property type="project" value="PomBase"/>
</dbReference>
<dbReference type="GO" id="GO:0010846">
    <property type="term" value="P:activation of reciprocal meiotic recombination"/>
    <property type="evidence" value="ECO:0000315"/>
    <property type="project" value="PomBase"/>
</dbReference>
<dbReference type="GO" id="GO:0110034">
    <property type="term" value="P:negative regulation of adenylate cyclase-activating glucose-activated G protein-coupled receptor signaling pathway"/>
    <property type="evidence" value="ECO:0000315"/>
    <property type="project" value="PomBase"/>
</dbReference>
<dbReference type="GO" id="GO:0060195">
    <property type="term" value="P:negative regulation of antisense RNA transcription"/>
    <property type="evidence" value="ECO:0000315"/>
    <property type="project" value="PomBase"/>
</dbReference>
<dbReference type="GO" id="GO:0045128">
    <property type="term" value="P:negative regulation of reciprocal meiotic recombination"/>
    <property type="evidence" value="ECO:0000315"/>
    <property type="project" value="PomBase"/>
</dbReference>
<dbReference type="GO" id="GO:0000122">
    <property type="term" value="P:negative regulation of transcription by RNA polymerase II"/>
    <property type="evidence" value="ECO:0000315"/>
    <property type="project" value="PomBase"/>
</dbReference>
<dbReference type="GO" id="GO:0045944">
    <property type="term" value="P:positive regulation of transcription by RNA polymerase II"/>
    <property type="evidence" value="ECO:0000315"/>
    <property type="project" value="PomBase"/>
</dbReference>
<dbReference type="GO" id="GO:0007131">
    <property type="term" value="P:reciprocal meiotic recombination"/>
    <property type="evidence" value="ECO:0000315"/>
    <property type="project" value="PomBase"/>
</dbReference>
<dbReference type="GO" id="GO:0006357">
    <property type="term" value="P:regulation of transcription by RNA polymerase II"/>
    <property type="evidence" value="ECO:0000318"/>
    <property type="project" value="GO_Central"/>
</dbReference>
<dbReference type="GO" id="GO:0030466">
    <property type="term" value="P:silent mating-type cassette heterochromatin formation"/>
    <property type="evidence" value="ECO:0000314"/>
    <property type="project" value="PomBase"/>
</dbReference>
<dbReference type="CDD" id="cd14687">
    <property type="entry name" value="bZIP_ATF2"/>
    <property type="match status" value="1"/>
</dbReference>
<dbReference type="FunFam" id="1.20.5.170:FF:000053">
    <property type="entry name" value="BZIP transcription factor AtfA"/>
    <property type="match status" value="1"/>
</dbReference>
<dbReference type="Gene3D" id="1.20.5.170">
    <property type="match status" value="1"/>
</dbReference>
<dbReference type="InterPro" id="IPR004827">
    <property type="entry name" value="bZIP"/>
</dbReference>
<dbReference type="InterPro" id="IPR046347">
    <property type="entry name" value="bZIP_sf"/>
</dbReference>
<dbReference type="InterPro" id="IPR051027">
    <property type="entry name" value="bZIP_transcription_factors"/>
</dbReference>
<dbReference type="InterPro" id="IPR021755">
    <property type="entry name" value="TF_Aft1_HRA"/>
</dbReference>
<dbReference type="InterPro" id="IPR020956">
    <property type="entry name" value="TF_Aft1_OSM"/>
</dbReference>
<dbReference type="PANTHER" id="PTHR19304">
    <property type="entry name" value="CYCLIC-AMP RESPONSE ELEMENT BINDING PROTEIN"/>
    <property type="match status" value="1"/>
</dbReference>
<dbReference type="Pfam" id="PF11786">
    <property type="entry name" value="Aft1_HRA"/>
    <property type="match status" value="1"/>
</dbReference>
<dbReference type="Pfam" id="PF11785">
    <property type="entry name" value="Aft1_OSA"/>
    <property type="match status" value="1"/>
</dbReference>
<dbReference type="Pfam" id="PF00170">
    <property type="entry name" value="bZIP_1"/>
    <property type="match status" value="1"/>
</dbReference>
<dbReference type="SMART" id="SM00338">
    <property type="entry name" value="BRLZ"/>
    <property type="match status" value="1"/>
</dbReference>
<dbReference type="SUPFAM" id="SSF57959">
    <property type="entry name" value="Leucine zipper domain"/>
    <property type="match status" value="1"/>
</dbReference>
<dbReference type="PROSITE" id="PS50217">
    <property type="entry name" value="BZIP"/>
    <property type="match status" value="1"/>
</dbReference>
<proteinExistence type="evidence at protein level"/>
<reference key="1">
    <citation type="journal article" date="1995" name="EMBO J.">
        <title>Schizosaccharomyces pombe atf1+ encodes a transcription factor required for sexual development and entry into stationary phase.</title>
        <authorList>
            <person name="Takeda T."/>
            <person name="Toda T."/>
            <person name="Kominami K."/>
            <person name="Kohnosu A."/>
            <person name="Yanagida M."/>
            <person name="Jones N."/>
        </authorList>
    </citation>
    <scope>NUCLEOTIDE SEQUENCE [GENOMIC DNA]</scope>
    <source>
        <strain>972 / ATCC 24843</strain>
    </source>
</reference>
<reference key="2">
    <citation type="journal article" date="1996" name="Genes Dev.">
        <title>Conjugation, meiosis, and the osmotic stress response are regulated by Spc1 kinase through Atf1 transcription factor in fission yeast.</title>
        <authorList>
            <person name="Shiozaki K."/>
            <person name="Russell P."/>
        </authorList>
    </citation>
    <scope>NUCLEOTIDE SEQUENCE [GENOMIC DNA]</scope>
    <scope>PHOSPHORYLATION BY STY1/SPC1</scope>
</reference>
<reference key="3">
    <citation type="journal article" date="1997" name="Proc. Natl. Acad. Sci. U.S.A.">
        <title>Transcription factor Mts1/Mts2 (Atf1/Pcr1, Gad7/Pcr1) activates the M26 meiotic recombination hotspot in Schizosaccharomyces pombe.</title>
        <authorList>
            <person name="Kon N."/>
            <person name="Krawchuk M.D."/>
            <person name="Warren B.G."/>
            <person name="Smith G.R."/>
            <person name="Wahls W.P."/>
        </authorList>
    </citation>
    <scope>NUCLEOTIDE SEQUENCE [GENOMIC DNA]</scope>
    <scope>FUNCTION</scope>
    <scope>SUBUNIT</scope>
</reference>
<reference key="4">
    <citation type="journal article" date="1996" name="Genes Cells">
        <title>Schizosaccharomyces pombe gad7+ encodes a phosphoprotein with a bZIP domain, which is required for proper G1 arrest and gene expression under nitrogen starvation.</title>
        <authorList>
            <person name="Kanoh J."/>
            <person name="Watanabe Y."/>
            <person name="Ohsugi M."/>
            <person name="Iino Y."/>
            <person name="Yamamoto M."/>
        </authorList>
    </citation>
    <scope>NUCLEOTIDE SEQUENCE [GENOMIC DNA]</scope>
</reference>
<reference key="5">
    <citation type="submission" date="1996-03" db="EMBL/GenBank/DDBJ databases">
        <title>S.pombe chromosome II cosmid 1228 sequence.</title>
        <authorList>
            <person name="Kohnosu A."/>
            <person name="Niwa O."/>
            <person name="Yano M."/>
            <person name="Saitoh S."/>
            <person name="Katayama T."/>
            <person name="Nagao K."/>
            <person name="Yanagida M."/>
        </authorList>
    </citation>
    <scope>NUCLEOTIDE SEQUENCE [GENOMIC DNA]</scope>
    <source>
        <strain>972 / ATCC 24843</strain>
    </source>
</reference>
<reference key="6">
    <citation type="journal article" date="2002" name="Nature">
        <title>The genome sequence of Schizosaccharomyces pombe.</title>
        <authorList>
            <person name="Wood V."/>
            <person name="Gwilliam R."/>
            <person name="Rajandream M.A."/>
            <person name="Lyne M.H."/>
            <person name="Lyne R."/>
            <person name="Stewart A."/>
            <person name="Sgouros J.G."/>
            <person name="Peat N."/>
            <person name="Hayles J."/>
            <person name="Baker S.G."/>
            <person name="Basham D."/>
            <person name="Bowman S."/>
            <person name="Brooks K."/>
            <person name="Brown D."/>
            <person name="Brown S."/>
            <person name="Chillingworth T."/>
            <person name="Churcher C.M."/>
            <person name="Collins M."/>
            <person name="Connor R."/>
            <person name="Cronin A."/>
            <person name="Davis P."/>
            <person name="Feltwell T."/>
            <person name="Fraser A."/>
            <person name="Gentles S."/>
            <person name="Goble A."/>
            <person name="Hamlin N."/>
            <person name="Harris D.E."/>
            <person name="Hidalgo J."/>
            <person name="Hodgson G."/>
            <person name="Holroyd S."/>
            <person name="Hornsby T."/>
            <person name="Howarth S."/>
            <person name="Huckle E.J."/>
            <person name="Hunt S."/>
            <person name="Jagels K."/>
            <person name="James K.D."/>
            <person name="Jones L."/>
            <person name="Jones M."/>
            <person name="Leather S."/>
            <person name="McDonald S."/>
            <person name="McLean J."/>
            <person name="Mooney P."/>
            <person name="Moule S."/>
            <person name="Mungall K.L."/>
            <person name="Murphy L.D."/>
            <person name="Niblett D."/>
            <person name="Odell C."/>
            <person name="Oliver K."/>
            <person name="O'Neil S."/>
            <person name="Pearson D."/>
            <person name="Quail M.A."/>
            <person name="Rabbinowitsch E."/>
            <person name="Rutherford K.M."/>
            <person name="Rutter S."/>
            <person name="Saunders D."/>
            <person name="Seeger K."/>
            <person name="Sharp S."/>
            <person name="Skelton J."/>
            <person name="Simmonds M.N."/>
            <person name="Squares R."/>
            <person name="Squares S."/>
            <person name="Stevens K."/>
            <person name="Taylor K."/>
            <person name="Taylor R.G."/>
            <person name="Tivey A."/>
            <person name="Walsh S.V."/>
            <person name="Warren T."/>
            <person name="Whitehead S."/>
            <person name="Woodward J.R."/>
            <person name="Volckaert G."/>
            <person name="Aert R."/>
            <person name="Robben J."/>
            <person name="Grymonprez B."/>
            <person name="Weltjens I."/>
            <person name="Vanstreels E."/>
            <person name="Rieger M."/>
            <person name="Schaefer M."/>
            <person name="Mueller-Auer S."/>
            <person name="Gabel C."/>
            <person name="Fuchs M."/>
            <person name="Duesterhoeft A."/>
            <person name="Fritzc C."/>
            <person name="Holzer E."/>
            <person name="Moestl D."/>
            <person name="Hilbert H."/>
            <person name="Borzym K."/>
            <person name="Langer I."/>
            <person name="Beck A."/>
            <person name="Lehrach H."/>
            <person name="Reinhardt R."/>
            <person name="Pohl T.M."/>
            <person name="Eger P."/>
            <person name="Zimmermann W."/>
            <person name="Wedler H."/>
            <person name="Wambutt R."/>
            <person name="Purnelle B."/>
            <person name="Goffeau A."/>
            <person name="Cadieu E."/>
            <person name="Dreano S."/>
            <person name="Gloux S."/>
            <person name="Lelaure V."/>
            <person name="Mottier S."/>
            <person name="Galibert F."/>
            <person name="Aves S.J."/>
            <person name="Xiang Z."/>
            <person name="Hunt C."/>
            <person name="Moore K."/>
            <person name="Hurst S.M."/>
            <person name="Lucas M."/>
            <person name="Rochet M."/>
            <person name="Gaillardin C."/>
            <person name="Tallada V.A."/>
            <person name="Garzon A."/>
            <person name="Thode G."/>
            <person name="Daga R.R."/>
            <person name="Cruzado L."/>
            <person name="Jimenez J."/>
            <person name="Sanchez M."/>
            <person name="del Rey F."/>
            <person name="Benito J."/>
            <person name="Dominguez A."/>
            <person name="Revuelta J.L."/>
            <person name="Moreno S."/>
            <person name="Armstrong J."/>
            <person name="Forsburg S.L."/>
            <person name="Cerutti L."/>
            <person name="Lowe T."/>
            <person name="McCombie W.R."/>
            <person name="Paulsen I."/>
            <person name="Potashkin J."/>
            <person name="Shpakovski G.V."/>
            <person name="Ussery D."/>
            <person name="Barrell B.G."/>
            <person name="Nurse P."/>
        </authorList>
    </citation>
    <scope>NUCLEOTIDE SEQUENCE [LARGE SCALE GENOMIC DNA]</scope>
    <source>
        <strain>972 / ATCC 24843</strain>
    </source>
</reference>
<reference key="7">
    <citation type="journal article" date="1994" name="Genes Dev.">
        <title>A heteromeric protein that binds to a meiotic homologous recombination hot spot: correlation of binding and hot spot activity.</title>
        <authorList>
            <person name="Wahls W.P."/>
            <person name="Smith G.R."/>
        </authorList>
    </citation>
    <scope>CHARACTERIZATION</scope>
</reference>
<reference key="8">
    <citation type="journal article" date="2017" name="Sci. Rep.">
        <title>Elp3 and Dph3 of Schizosaccharomyces pombe mediate cellular stress responses through tRNALysUUU modifications.</title>
        <authorList>
            <person name="Villahermosa D."/>
            <person name="Fleck O."/>
        </authorList>
    </citation>
    <scope>DISRUPTION PHENOTYPE</scope>
</reference>
<name>ATF1_SCHPO</name>
<sequence length="566" mass="59711">MSPSPVNTSTEPASVAAVSNGNATASSTQVPENNQSDSFAPPSNNSQQNQQSSTIAPNGGAGSVANANPADQSDGVTPSFVGSLKLDYEPNPFEHSFGSTASVGQGNPSLNRNPSLSNIPSGVPPAFARTLLPPVSSIASPDILSGAPGIASPLGYPAWSAFTRGTMHNPLSPAIYDATLRPDYLNNPSDASAAARFSSGTGFTPGVNEPFRSLLTPTGAGFPAPSPGTANLLGFHTFDSQFPDQYRFTPRDGKPPVVNGTNGDQSDYFGANAAVHGLCLLSQVPDQQQKLQQPISSENDQAASTTANNLLKQTQQQTFPDSIRPSFTQNTNPQAVTGTMNPQASRTQQQPMYFMGSQQFNGMPSVYGDTVNPADPSLTLRQTTDFSGQNAENGSTNLPQKTSNSDMPTANSMPVKLENGTDYSTSQEPSSNANNQSSPTSSINGKASSESANGTSYSKGSSRRNSKNETDEEKRKSFLERNRQAALKCRQRKKQWLSNLQAKVEFYGNENEILSAQVSALREEIVSLKTLLIAHKDCPVAKSNSAAVATSVIGSGDLAQRINLGY</sequence>
<protein>
    <recommendedName>
        <fullName>Transcription factor atf1</fullName>
    </recommendedName>
    <alternativeName>
        <fullName>Protein sss1</fullName>
    </alternativeName>
    <alternativeName>
        <fullName>Transcription factor mts1</fullName>
    </alternativeName>
</protein>
<accession>P52890</accession>
<accession>P78944</accession>
<comment type="function">
    <text evidence="5">Transcription factor required for sexual development and entry into stationary phase. Binds and activates CRE sites (cAMP-response elements, also known as M26 meiotic recombination hotspots).</text>
</comment>
<comment type="subunit">
    <text evidence="5">Heterodimer of pcr1/mts2 and atf1/mts1.</text>
</comment>
<comment type="interaction">
    <interactant intactId="EBI-3861527">
        <id>P52890</id>
    </interactant>
    <interactant intactId="EBI-3648525">
        <id>Q09892</id>
        <label>sty1</label>
    </interactant>
    <organismsDiffer>false</organismsDiffer>
    <experiments>2</experiments>
</comment>
<comment type="subcellular location">
    <subcellularLocation>
        <location>Nucleus</location>
    </subcellularLocation>
</comment>
<comment type="PTM">
    <text evidence="4">Phosphorylated by sty1/spc1.</text>
</comment>
<comment type="disruption phenotype">
    <text evidence="3">Sensitive to methyl methanesulfonate (MMS, causes DNA breaks), hydroxyurea (HU, ribonucleotide reductase inhibitor), thiabendazole (TBZ), sirolimus (TORC1 inhibitor), and cold (PubMed:28775286). Simultaneous disruption of dph3 exacerbates sensitivity to HU and MMS (PubMed:28775286).</text>
</comment>
<comment type="similarity">
    <text evidence="6">Belongs to the bZIP family.</text>
</comment>
<keyword id="KW-0010">Activator</keyword>
<keyword id="KW-0238">DNA-binding</keyword>
<keyword id="KW-0469">Meiosis</keyword>
<keyword id="KW-0539">Nucleus</keyword>
<keyword id="KW-0597">Phosphoprotein</keyword>
<keyword id="KW-1185">Reference proteome</keyword>
<keyword id="KW-0804">Transcription</keyword>
<keyword id="KW-0805">Transcription regulation</keyword>
<feature type="chain" id="PRO_0000076533" description="Transcription factor atf1">
    <location>
        <begin position="1"/>
        <end position="566"/>
    </location>
</feature>
<feature type="domain" description="bZIP" evidence="1">
    <location>
        <begin position="472"/>
        <end position="535"/>
    </location>
</feature>
<feature type="region of interest" description="Disordered" evidence="2">
    <location>
        <begin position="1"/>
        <end position="83"/>
    </location>
</feature>
<feature type="region of interest" description="Disordered" evidence="2">
    <location>
        <begin position="96"/>
        <end position="117"/>
    </location>
</feature>
<feature type="region of interest" description="Disordered" evidence="2">
    <location>
        <begin position="315"/>
        <end position="345"/>
    </location>
</feature>
<feature type="region of interest" description="Disordered" evidence="2">
    <location>
        <begin position="357"/>
        <end position="479"/>
    </location>
</feature>
<feature type="region of interest" description="Basic motif" evidence="1">
    <location>
        <begin position="474"/>
        <end position="503"/>
    </location>
</feature>
<feature type="region of interest" description="Leucine-zipper" evidence="1">
    <location>
        <begin position="514"/>
        <end position="528"/>
    </location>
</feature>
<feature type="compositionally biased region" description="Polar residues" evidence="2">
    <location>
        <begin position="1"/>
        <end position="42"/>
    </location>
</feature>
<feature type="compositionally biased region" description="Low complexity" evidence="2">
    <location>
        <begin position="43"/>
        <end position="53"/>
    </location>
</feature>
<feature type="compositionally biased region" description="Polar residues" evidence="2">
    <location>
        <begin position="65"/>
        <end position="76"/>
    </location>
</feature>
<feature type="compositionally biased region" description="Polar residues" evidence="2">
    <location>
        <begin position="97"/>
        <end position="106"/>
    </location>
</feature>
<feature type="compositionally biased region" description="Low complexity" evidence="2">
    <location>
        <begin position="107"/>
        <end position="117"/>
    </location>
</feature>
<feature type="compositionally biased region" description="Polar residues" evidence="2">
    <location>
        <begin position="379"/>
        <end position="412"/>
    </location>
</feature>
<feature type="compositionally biased region" description="Polar residues" evidence="2">
    <location>
        <begin position="421"/>
        <end position="460"/>
    </location>
</feature>
<feature type="compositionally biased region" description="Basic and acidic residues" evidence="2">
    <location>
        <begin position="466"/>
        <end position="479"/>
    </location>
</feature>
<evidence type="ECO:0000255" key="1">
    <source>
        <dbReference type="PROSITE-ProRule" id="PRU00978"/>
    </source>
</evidence>
<evidence type="ECO:0000256" key="2">
    <source>
        <dbReference type="SAM" id="MobiDB-lite"/>
    </source>
</evidence>
<evidence type="ECO:0000269" key="3">
    <source>
    </source>
</evidence>
<evidence type="ECO:0000269" key="4">
    <source>
    </source>
</evidence>
<evidence type="ECO:0000269" key="5">
    <source>
    </source>
</evidence>
<evidence type="ECO:0000305" key="6"/>